<name>PURA_MAGMM</name>
<dbReference type="EC" id="6.3.4.4" evidence="1"/>
<dbReference type="EMBL" id="CP000471">
    <property type="protein sequence ID" value="ABK44032.1"/>
    <property type="status" value="ALT_INIT"/>
    <property type="molecule type" value="Genomic_DNA"/>
</dbReference>
<dbReference type="RefSeq" id="WP_041640981.1">
    <property type="nucleotide sequence ID" value="NC_008576.1"/>
</dbReference>
<dbReference type="SMR" id="A0L7T9"/>
<dbReference type="STRING" id="156889.Mmc1_1523"/>
<dbReference type="KEGG" id="mgm:Mmc1_1523"/>
<dbReference type="eggNOG" id="COG0104">
    <property type="taxonomic scope" value="Bacteria"/>
</dbReference>
<dbReference type="HOGENOM" id="CLU_029848_0_0_5"/>
<dbReference type="UniPathway" id="UPA00075">
    <property type="reaction ID" value="UER00335"/>
</dbReference>
<dbReference type="Proteomes" id="UP000002586">
    <property type="component" value="Chromosome"/>
</dbReference>
<dbReference type="GO" id="GO:0005737">
    <property type="term" value="C:cytoplasm"/>
    <property type="evidence" value="ECO:0007669"/>
    <property type="project" value="UniProtKB-SubCell"/>
</dbReference>
<dbReference type="GO" id="GO:0004019">
    <property type="term" value="F:adenylosuccinate synthase activity"/>
    <property type="evidence" value="ECO:0007669"/>
    <property type="project" value="UniProtKB-UniRule"/>
</dbReference>
<dbReference type="GO" id="GO:0005525">
    <property type="term" value="F:GTP binding"/>
    <property type="evidence" value="ECO:0007669"/>
    <property type="project" value="UniProtKB-UniRule"/>
</dbReference>
<dbReference type="GO" id="GO:0000287">
    <property type="term" value="F:magnesium ion binding"/>
    <property type="evidence" value="ECO:0007669"/>
    <property type="project" value="UniProtKB-UniRule"/>
</dbReference>
<dbReference type="GO" id="GO:0044208">
    <property type="term" value="P:'de novo' AMP biosynthetic process"/>
    <property type="evidence" value="ECO:0007669"/>
    <property type="project" value="UniProtKB-UniRule"/>
</dbReference>
<dbReference type="GO" id="GO:0046040">
    <property type="term" value="P:IMP metabolic process"/>
    <property type="evidence" value="ECO:0007669"/>
    <property type="project" value="TreeGrafter"/>
</dbReference>
<dbReference type="CDD" id="cd03108">
    <property type="entry name" value="AdSS"/>
    <property type="match status" value="1"/>
</dbReference>
<dbReference type="FunFam" id="1.10.300.10:FF:000001">
    <property type="entry name" value="Adenylosuccinate synthetase"/>
    <property type="match status" value="1"/>
</dbReference>
<dbReference type="FunFam" id="3.90.170.10:FF:000001">
    <property type="entry name" value="Adenylosuccinate synthetase"/>
    <property type="match status" value="1"/>
</dbReference>
<dbReference type="Gene3D" id="3.40.440.10">
    <property type="entry name" value="Adenylosuccinate Synthetase, subunit A, domain 1"/>
    <property type="match status" value="1"/>
</dbReference>
<dbReference type="Gene3D" id="1.10.300.10">
    <property type="entry name" value="Adenylosuccinate Synthetase, subunit A, domain 2"/>
    <property type="match status" value="1"/>
</dbReference>
<dbReference type="Gene3D" id="3.90.170.10">
    <property type="entry name" value="Adenylosuccinate Synthetase, subunit A, domain 3"/>
    <property type="match status" value="1"/>
</dbReference>
<dbReference type="HAMAP" id="MF_00011">
    <property type="entry name" value="Adenylosucc_synth"/>
    <property type="match status" value="1"/>
</dbReference>
<dbReference type="InterPro" id="IPR018220">
    <property type="entry name" value="Adenylosuccin_syn_GTP-bd"/>
</dbReference>
<dbReference type="InterPro" id="IPR033128">
    <property type="entry name" value="Adenylosuccin_syn_Lys_AS"/>
</dbReference>
<dbReference type="InterPro" id="IPR042109">
    <property type="entry name" value="Adenylosuccinate_synth_dom1"/>
</dbReference>
<dbReference type="InterPro" id="IPR042110">
    <property type="entry name" value="Adenylosuccinate_synth_dom2"/>
</dbReference>
<dbReference type="InterPro" id="IPR042111">
    <property type="entry name" value="Adenylosuccinate_synth_dom3"/>
</dbReference>
<dbReference type="InterPro" id="IPR001114">
    <property type="entry name" value="Adenylosuccinate_synthetase"/>
</dbReference>
<dbReference type="InterPro" id="IPR027417">
    <property type="entry name" value="P-loop_NTPase"/>
</dbReference>
<dbReference type="NCBIfam" id="NF002223">
    <property type="entry name" value="PRK01117.1"/>
    <property type="match status" value="1"/>
</dbReference>
<dbReference type="NCBIfam" id="TIGR00184">
    <property type="entry name" value="purA"/>
    <property type="match status" value="1"/>
</dbReference>
<dbReference type="PANTHER" id="PTHR11846">
    <property type="entry name" value="ADENYLOSUCCINATE SYNTHETASE"/>
    <property type="match status" value="1"/>
</dbReference>
<dbReference type="PANTHER" id="PTHR11846:SF0">
    <property type="entry name" value="ADENYLOSUCCINATE SYNTHETASE"/>
    <property type="match status" value="1"/>
</dbReference>
<dbReference type="Pfam" id="PF00709">
    <property type="entry name" value="Adenylsucc_synt"/>
    <property type="match status" value="1"/>
</dbReference>
<dbReference type="SMART" id="SM00788">
    <property type="entry name" value="Adenylsucc_synt"/>
    <property type="match status" value="1"/>
</dbReference>
<dbReference type="SUPFAM" id="SSF52540">
    <property type="entry name" value="P-loop containing nucleoside triphosphate hydrolases"/>
    <property type="match status" value="1"/>
</dbReference>
<dbReference type="PROSITE" id="PS01266">
    <property type="entry name" value="ADENYLOSUCCIN_SYN_1"/>
    <property type="match status" value="1"/>
</dbReference>
<dbReference type="PROSITE" id="PS00513">
    <property type="entry name" value="ADENYLOSUCCIN_SYN_2"/>
    <property type="match status" value="1"/>
</dbReference>
<organism>
    <name type="scientific">Magnetococcus marinus (strain ATCC BAA-1437 / JCM 17883 / MC-1)</name>
    <dbReference type="NCBI Taxonomy" id="156889"/>
    <lineage>
        <taxon>Bacteria</taxon>
        <taxon>Pseudomonadati</taxon>
        <taxon>Pseudomonadota</taxon>
        <taxon>Alphaproteobacteria</taxon>
        <taxon>Magnetococcales</taxon>
        <taxon>Magnetococcaceae</taxon>
        <taxon>Magnetococcus</taxon>
    </lineage>
</organism>
<sequence length="432" mass="47029">MSNVVIVGTQWGDEGKGKIVDLLTEQADMVVRFQGGHNAGHTLVVDGKKYILHLIPSGIIRPGKQCAIGNGVVLDPAALLAEMAKLAEVGVAISPENLKIADRTNLILPYHNALDQAREKKKGEEKKIGTTGRGIGPCYEDKSARRGIRLVDLYNPALFEEKLRENLDLVNFLLKNYYHEEGFQLADIRDDYLRMGDQLAPYCEDLAPWLEQAQAEGKNILFEGAQGALLDVDFGTYPFVTSSTTNASGACSGSGVAPGKLDYVLGIVKAYTTRVGSGPFPTELECADGQYLAKKGHEFGATTGRPRRCGWFDAVVVRHSARVSGLNGICITKLDVMDGMSEVRLCTGYRIDGKETAYVPADTAKLDRVEPIYETMPGWRESTVGCKNWQDLPAAAQAYLNRLVQVVGVPISILSTGPDRSETLIVQNPFHA</sequence>
<accession>A0L7T9</accession>
<keyword id="KW-0963">Cytoplasm</keyword>
<keyword id="KW-0342">GTP-binding</keyword>
<keyword id="KW-0436">Ligase</keyword>
<keyword id="KW-0460">Magnesium</keyword>
<keyword id="KW-0479">Metal-binding</keyword>
<keyword id="KW-0547">Nucleotide-binding</keyword>
<keyword id="KW-0658">Purine biosynthesis</keyword>
<keyword id="KW-1185">Reference proteome</keyword>
<proteinExistence type="inferred from homology"/>
<protein>
    <recommendedName>
        <fullName evidence="1">Adenylosuccinate synthetase</fullName>
        <shortName evidence="1">AMPSase</shortName>
        <shortName evidence="1">AdSS</shortName>
        <ecNumber evidence="1">6.3.4.4</ecNumber>
    </recommendedName>
    <alternativeName>
        <fullName evidence="1">IMP--aspartate ligase</fullName>
    </alternativeName>
</protein>
<evidence type="ECO:0000255" key="1">
    <source>
        <dbReference type="HAMAP-Rule" id="MF_00011"/>
    </source>
</evidence>
<evidence type="ECO:0000305" key="2"/>
<feature type="chain" id="PRO_0000321800" description="Adenylosuccinate synthetase">
    <location>
        <begin position="1"/>
        <end position="432"/>
    </location>
</feature>
<feature type="active site" description="Proton acceptor" evidence="1">
    <location>
        <position position="13"/>
    </location>
</feature>
<feature type="active site" description="Proton donor" evidence="1">
    <location>
        <position position="41"/>
    </location>
</feature>
<feature type="binding site" evidence="1">
    <location>
        <begin position="12"/>
        <end position="18"/>
    </location>
    <ligand>
        <name>GTP</name>
        <dbReference type="ChEBI" id="CHEBI:37565"/>
    </ligand>
</feature>
<feature type="binding site" description="in other chain" evidence="1">
    <location>
        <begin position="13"/>
        <end position="16"/>
    </location>
    <ligand>
        <name>IMP</name>
        <dbReference type="ChEBI" id="CHEBI:58053"/>
        <note>ligand shared between dimeric partners</note>
    </ligand>
</feature>
<feature type="binding site" evidence="1">
    <location>
        <position position="13"/>
    </location>
    <ligand>
        <name>Mg(2+)</name>
        <dbReference type="ChEBI" id="CHEBI:18420"/>
    </ligand>
</feature>
<feature type="binding site" description="in other chain" evidence="1">
    <location>
        <begin position="38"/>
        <end position="41"/>
    </location>
    <ligand>
        <name>IMP</name>
        <dbReference type="ChEBI" id="CHEBI:58053"/>
        <note>ligand shared between dimeric partners</note>
    </ligand>
</feature>
<feature type="binding site" evidence="1">
    <location>
        <begin position="40"/>
        <end position="42"/>
    </location>
    <ligand>
        <name>GTP</name>
        <dbReference type="ChEBI" id="CHEBI:37565"/>
    </ligand>
</feature>
<feature type="binding site" evidence="1">
    <location>
        <position position="40"/>
    </location>
    <ligand>
        <name>Mg(2+)</name>
        <dbReference type="ChEBI" id="CHEBI:18420"/>
    </ligand>
</feature>
<feature type="binding site" description="in other chain" evidence="1">
    <location>
        <position position="131"/>
    </location>
    <ligand>
        <name>IMP</name>
        <dbReference type="ChEBI" id="CHEBI:58053"/>
        <note>ligand shared between dimeric partners</note>
    </ligand>
</feature>
<feature type="binding site" evidence="1">
    <location>
        <position position="145"/>
    </location>
    <ligand>
        <name>IMP</name>
        <dbReference type="ChEBI" id="CHEBI:58053"/>
        <note>ligand shared between dimeric partners</note>
    </ligand>
</feature>
<feature type="binding site" description="in other chain" evidence="1">
    <location>
        <position position="226"/>
    </location>
    <ligand>
        <name>IMP</name>
        <dbReference type="ChEBI" id="CHEBI:58053"/>
        <note>ligand shared between dimeric partners</note>
    </ligand>
</feature>
<feature type="binding site" description="in other chain" evidence="1">
    <location>
        <position position="241"/>
    </location>
    <ligand>
        <name>IMP</name>
        <dbReference type="ChEBI" id="CHEBI:58053"/>
        <note>ligand shared between dimeric partners</note>
    </ligand>
</feature>
<feature type="binding site" evidence="1">
    <location>
        <begin position="301"/>
        <end position="307"/>
    </location>
    <ligand>
        <name>substrate</name>
    </ligand>
</feature>
<feature type="binding site" description="in other chain" evidence="1">
    <location>
        <position position="305"/>
    </location>
    <ligand>
        <name>IMP</name>
        <dbReference type="ChEBI" id="CHEBI:58053"/>
        <note>ligand shared between dimeric partners</note>
    </ligand>
</feature>
<feature type="binding site" evidence="1">
    <location>
        <position position="307"/>
    </location>
    <ligand>
        <name>GTP</name>
        <dbReference type="ChEBI" id="CHEBI:37565"/>
    </ligand>
</feature>
<feature type="binding site" evidence="1">
    <location>
        <begin position="333"/>
        <end position="335"/>
    </location>
    <ligand>
        <name>GTP</name>
        <dbReference type="ChEBI" id="CHEBI:37565"/>
    </ligand>
</feature>
<feature type="binding site" evidence="1">
    <location>
        <begin position="415"/>
        <end position="417"/>
    </location>
    <ligand>
        <name>GTP</name>
        <dbReference type="ChEBI" id="CHEBI:37565"/>
    </ligand>
</feature>
<comment type="function">
    <text evidence="1">Plays an important role in the de novo pathway of purine nucleotide biosynthesis. Catalyzes the first committed step in the biosynthesis of AMP from IMP.</text>
</comment>
<comment type="catalytic activity">
    <reaction evidence="1">
        <text>IMP + L-aspartate + GTP = N(6)-(1,2-dicarboxyethyl)-AMP + GDP + phosphate + 2 H(+)</text>
        <dbReference type="Rhea" id="RHEA:15753"/>
        <dbReference type="ChEBI" id="CHEBI:15378"/>
        <dbReference type="ChEBI" id="CHEBI:29991"/>
        <dbReference type="ChEBI" id="CHEBI:37565"/>
        <dbReference type="ChEBI" id="CHEBI:43474"/>
        <dbReference type="ChEBI" id="CHEBI:57567"/>
        <dbReference type="ChEBI" id="CHEBI:58053"/>
        <dbReference type="ChEBI" id="CHEBI:58189"/>
        <dbReference type="EC" id="6.3.4.4"/>
    </reaction>
</comment>
<comment type="cofactor">
    <cofactor evidence="1">
        <name>Mg(2+)</name>
        <dbReference type="ChEBI" id="CHEBI:18420"/>
    </cofactor>
    <text evidence="1">Binds 1 Mg(2+) ion per subunit.</text>
</comment>
<comment type="pathway">
    <text evidence="1">Purine metabolism; AMP biosynthesis via de novo pathway; AMP from IMP: step 1/2.</text>
</comment>
<comment type="subunit">
    <text evidence="1">Homodimer.</text>
</comment>
<comment type="subcellular location">
    <subcellularLocation>
        <location evidence="1">Cytoplasm</location>
    </subcellularLocation>
</comment>
<comment type="similarity">
    <text evidence="1">Belongs to the adenylosuccinate synthetase family.</text>
</comment>
<comment type="sequence caution" evidence="2">
    <conflict type="erroneous initiation">
        <sequence resource="EMBL-CDS" id="ABK44032"/>
    </conflict>
</comment>
<gene>
    <name evidence="1" type="primary">purA</name>
    <name type="ordered locus">Mmc1_1523</name>
</gene>
<reference key="1">
    <citation type="journal article" date="2009" name="Appl. Environ. Microbiol.">
        <title>Complete genome sequence of the chemolithoautotrophic marine magnetotactic coccus strain MC-1.</title>
        <authorList>
            <person name="Schubbe S."/>
            <person name="Williams T.J."/>
            <person name="Xie G."/>
            <person name="Kiss H.E."/>
            <person name="Brettin T.S."/>
            <person name="Martinez D."/>
            <person name="Ross C.A."/>
            <person name="Schuler D."/>
            <person name="Cox B.L."/>
            <person name="Nealson K.H."/>
            <person name="Bazylinski D.A."/>
        </authorList>
    </citation>
    <scope>NUCLEOTIDE SEQUENCE [LARGE SCALE GENOMIC DNA]</scope>
    <source>
        <strain>ATCC BAA-1437 / JCM 17883 / MC-1</strain>
    </source>
</reference>